<protein>
    <recommendedName>
        <fullName evidence="1">Methionine synthase</fullName>
        <ecNumber evidence="1">2.1.1.-</ecNumber>
    </recommendedName>
    <alternativeName>
        <fullName evidence="1">Homocysteine methyltransferase</fullName>
    </alternativeName>
</protein>
<feature type="chain" id="PRO_1000204853" description="Methionine synthase">
    <location>
        <begin position="1"/>
        <end position="332"/>
    </location>
</feature>
<feature type="binding site" evidence="1">
    <location>
        <position position="211"/>
    </location>
    <ligand>
        <name>Zn(2+)</name>
        <dbReference type="ChEBI" id="CHEBI:29105"/>
        <note>catalytic</note>
    </ligand>
</feature>
<feature type="binding site" evidence="1">
    <location>
        <position position="213"/>
    </location>
    <ligand>
        <name>Zn(2+)</name>
        <dbReference type="ChEBI" id="CHEBI:29105"/>
        <note>catalytic</note>
    </ligand>
</feature>
<feature type="binding site" evidence="1">
    <location>
        <position position="296"/>
    </location>
    <ligand>
        <name>Zn(2+)</name>
        <dbReference type="ChEBI" id="CHEBI:29105"/>
        <note>catalytic</note>
    </ligand>
</feature>
<sequence length="332" mass="38258">MSKLPLLPTTVIGSYPRPKWLRESIRLHKAGKISDEDLQEAFNDAVIAVLKDHYNAGVDVPTDGEVRRDEMVEFFAERIKGFKFYGPVRVWGTAYYRKPSVVSKIEYKKPMLVDEFTFAKSVSYTDNLKITITGPYTIAEWSYNEYYKNKKDLVFDLAKAINQEIKNLVEAGAKIIQIDEPALHTRREDVSWGVEAVNEAVKGVNAKLVMHICYGEYSFVAPYLNELKVDQINFAFKIYNYKPLELLKRYGFDKELGAGVIDVHNRRIETSEEVANDIRKILEYFTPEKVWINPDCGLKLLSRKIAYQKLVSMVEGTKVVREELKRKGYSVD</sequence>
<name>METE_SACI3</name>
<evidence type="ECO:0000255" key="1">
    <source>
        <dbReference type="HAMAP-Rule" id="MF_00288"/>
    </source>
</evidence>
<evidence type="ECO:0000305" key="2"/>
<keyword id="KW-0028">Amino-acid biosynthesis</keyword>
<keyword id="KW-0479">Metal-binding</keyword>
<keyword id="KW-0486">Methionine biosynthesis</keyword>
<keyword id="KW-0489">Methyltransferase</keyword>
<keyword id="KW-0808">Transferase</keyword>
<keyword id="KW-0862">Zinc</keyword>
<accession>C3MZ55</accession>
<proteinExistence type="inferred from homology"/>
<comment type="function">
    <text evidence="1">Catalyzes the transfer of a methyl group to L-homocysteine resulting in methionine formation. The physiological methyl donor is unknown.</text>
</comment>
<comment type="cofactor">
    <cofactor evidence="1">
        <name>Zn(2+)</name>
        <dbReference type="ChEBI" id="CHEBI:29105"/>
    </cofactor>
    <text evidence="1">Binds 1 zinc ion per subunit.</text>
</comment>
<comment type="pathway">
    <text evidence="1">Amino-acid biosynthesis; L-methionine biosynthesis via de novo pathway.</text>
</comment>
<comment type="similarity">
    <text evidence="1 2">Belongs to the archaeal MetE family.</text>
</comment>
<gene>
    <name evidence="1" type="primary">metE</name>
    <name type="ordered locus">M1627_1812</name>
</gene>
<dbReference type="EC" id="2.1.1.-" evidence="1"/>
<dbReference type="EMBL" id="CP001401">
    <property type="protein sequence ID" value="ACP55687.1"/>
    <property type="molecule type" value="Genomic_DNA"/>
</dbReference>
<dbReference type="RefSeq" id="WP_012711676.1">
    <property type="nucleotide sequence ID" value="NC_012632.1"/>
</dbReference>
<dbReference type="SMR" id="C3MZ55"/>
<dbReference type="KEGG" id="sim:M1627_1812"/>
<dbReference type="HOGENOM" id="CLU_040013_3_2_2"/>
<dbReference type="UniPathway" id="UPA00051"/>
<dbReference type="Proteomes" id="UP000002307">
    <property type="component" value="Chromosome"/>
</dbReference>
<dbReference type="GO" id="GO:0003871">
    <property type="term" value="F:5-methyltetrahydropteroyltriglutamate-homocysteine S-methyltransferase activity"/>
    <property type="evidence" value="ECO:0007669"/>
    <property type="project" value="InterPro"/>
</dbReference>
<dbReference type="GO" id="GO:0008270">
    <property type="term" value="F:zinc ion binding"/>
    <property type="evidence" value="ECO:0007669"/>
    <property type="project" value="InterPro"/>
</dbReference>
<dbReference type="GO" id="GO:0009086">
    <property type="term" value="P:methionine biosynthetic process"/>
    <property type="evidence" value="ECO:0007669"/>
    <property type="project" value="UniProtKB-UniRule"/>
</dbReference>
<dbReference type="GO" id="GO:0032259">
    <property type="term" value="P:methylation"/>
    <property type="evidence" value="ECO:0007669"/>
    <property type="project" value="UniProtKB-KW"/>
</dbReference>
<dbReference type="CDD" id="cd03311">
    <property type="entry name" value="CIMS_C_terminal_like"/>
    <property type="match status" value="1"/>
</dbReference>
<dbReference type="Gene3D" id="3.20.20.210">
    <property type="match status" value="1"/>
</dbReference>
<dbReference type="HAMAP" id="MF_00288">
    <property type="entry name" value="MetE"/>
    <property type="match status" value="1"/>
</dbReference>
<dbReference type="InterPro" id="IPR002629">
    <property type="entry name" value="Met_Synth_C/arc"/>
</dbReference>
<dbReference type="InterPro" id="IPR022921">
    <property type="entry name" value="MetE_arc"/>
</dbReference>
<dbReference type="InterPro" id="IPR038071">
    <property type="entry name" value="UROD/MetE-like_sf"/>
</dbReference>
<dbReference type="NCBIfam" id="NF003317">
    <property type="entry name" value="PRK04326.1"/>
    <property type="match status" value="1"/>
</dbReference>
<dbReference type="PANTHER" id="PTHR30519">
    <property type="entry name" value="5-METHYLTETRAHYDROPTEROYLTRIGLUTAMATE--HOMOCYSTEINE METHYLTRANSFERASE"/>
    <property type="match status" value="1"/>
</dbReference>
<dbReference type="Pfam" id="PF01717">
    <property type="entry name" value="Meth_synt_2"/>
    <property type="match status" value="1"/>
</dbReference>
<dbReference type="SUPFAM" id="SSF51726">
    <property type="entry name" value="UROD/MetE-like"/>
    <property type="match status" value="1"/>
</dbReference>
<organism>
    <name type="scientific">Saccharolobus islandicus (strain M.16.27)</name>
    <name type="common">Sulfolobus islandicus</name>
    <dbReference type="NCBI Taxonomy" id="427318"/>
    <lineage>
        <taxon>Archaea</taxon>
        <taxon>Thermoproteota</taxon>
        <taxon>Thermoprotei</taxon>
        <taxon>Sulfolobales</taxon>
        <taxon>Sulfolobaceae</taxon>
        <taxon>Saccharolobus</taxon>
    </lineage>
</organism>
<reference key="1">
    <citation type="journal article" date="2009" name="Proc. Natl. Acad. Sci. U.S.A.">
        <title>Biogeography of the Sulfolobus islandicus pan-genome.</title>
        <authorList>
            <person name="Reno M.L."/>
            <person name="Held N.L."/>
            <person name="Fields C.J."/>
            <person name="Burke P.V."/>
            <person name="Whitaker R.J."/>
        </authorList>
    </citation>
    <scope>NUCLEOTIDE SEQUENCE [LARGE SCALE GENOMIC DNA]</scope>
    <source>
        <strain>M.16.27</strain>
    </source>
</reference>